<gene>
    <name evidence="1" type="primary">cyaY</name>
    <name type="ordered locus">Psyr_0180</name>
</gene>
<comment type="function">
    <text evidence="1">Involved in iron-sulfur (Fe-S) cluster assembly. May act as a regulator of Fe-S biogenesis.</text>
</comment>
<comment type="similarity">
    <text evidence="1">Belongs to the frataxin family.</text>
</comment>
<keyword id="KW-0408">Iron</keyword>
<keyword id="KW-0479">Metal-binding</keyword>
<name>CYAY_PSEU2</name>
<organism>
    <name type="scientific">Pseudomonas syringae pv. syringae (strain B728a)</name>
    <dbReference type="NCBI Taxonomy" id="205918"/>
    <lineage>
        <taxon>Bacteria</taxon>
        <taxon>Pseudomonadati</taxon>
        <taxon>Pseudomonadota</taxon>
        <taxon>Gammaproteobacteria</taxon>
        <taxon>Pseudomonadales</taxon>
        <taxon>Pseudomonadaceae</taxon>
        <taxon>Pseudomonas</taxon>
        <taxon>Pseudomonas syringae</taxon>
    </lineage>
</organism>
<sequence>MSLTEARFHDLVDATQQNIEDVFDDSGLDVDLENSAGVLTVKFEGGTQLIFSRQEPLRQLWLAARSGGFHFDYDEENQCWACDSSDELLSEMLERFTVEQAGVELDFSEI</sequence>
<protein>
    <recommendedName>
        <fullName evidence="1">Iron-sulfur cluster assembly protein CyaY</fullName>
    </recommendedName>
</protein>
<proteinExistence type="inferred from homology"/>
<reference key="1">
    <citation type="journal article" date="2005" name="Proc. Natl. Acad. Sci. U.S.A.">
        <title>Comparison of the complete genome sequences of Pseudomonas syringae pv. syringae B728a and pv. tomato DC3000.</title>
        <authorList>
            <person name="Feil H."/>
            <person name="Feil W.S."/>
            <person name="Chain P."/>
            <person name="Larimer F."/>
            <person name="Dibartolo G."/>
            <person name="Copeland A."/>
            <person name="Lykidis A."/>
            <person name="Trong S."/>
            <person name="Nolan M."/>
            <person name="Goltsman E."/>
            <person name="Thiel J."/>
            <person name="Malfatti S."/>
            <person name="Loper J.E."/>
            <person name="Lapidus A."/>
            <person name="Detter J.C."/>
            <person name="Land M."/>
            <person name="Richardson P.M."/>
            <person name="Kyrpides N.C."/>
            <person name="Ivanova N."/>
            <person name="Lindow S.E."/>
        </authorList>
    </citation>
    <scope>NUCLEOTIDE SEQUENCE [LARGE SCALE GENOMIC DNA]</scope>
    <source>
        <strain>B728a</strain>
    </source>
</reference>
<dbReference type="EMBL" id="CP000075">
    <property type="protein sequence ID" value="AAY35253.1"/>
    <property type="molecule type" value="Genomic_DNA"/>
</dbReference>
<dbReference type="RefSeq" id="WP_003318093.1">
    <property type="nucleotide sequence ID" value="NC_007005.1"/>
</dbReference>
<dbReference type="RefSeq" id="YP_233291.1">
    <property type="nucleotide sequence ID" value="NC_007005.1"/>
</dbReference>
<dbReference type="SMR" id="Q500B9"/>
<dbReference type="STRING" id="205918.Psyr_0180"/>
<dbReference type="KEGG" id="psb:Psyr_0180"/>
<dbReference type="PATRIC" id="fig|205918.7.peg.176"/>
<dbReference type="eggNOG" id="COG1965">
    <property type="taxonomic scope" value="Bacteria"/>
</dbReference>
<dbReference type="HOGENOM" id="CLU_080880_3_0_6"/>
<dbReference type="OrthoDB" id="285675at2"/>
<dbReference type="Proteomes" id="UP000000426">
    <property type="component" value="Chromosome"/>
</dbReference>
<dbReference type="GO" id="GO:0005829">
    <property type="term" value="C:cytosol"/>
    <property type="evidence" value="ECO:0007669"/>
    <property type="project" value="TreeGrafter"/>
</dbReference>
<dbReference type="GO" id="GO:0008199">
    <property type="term" value="F:ferric iron binding"/>
    <property type="evidence" value="ECO:0007669"/>
    <property type="project" value="InterPro"/>
</dbReference>
<dbReference type="GO" id="GO:0008198">
    <property type="term" value="F:ferrous iron binding"/>
    <property type="evidence" value="ECO:0007669"/>
    <property type="project" value="TreeGrafter"/>
</dbReference>
<dbReference type="GO" id="GO:0016226">
    <property type="term" value="P:iron-sulfur cluster assembly"/>
    <property type="evidence" value="ECO:0007669"/>
    <property type="project" value="UniProtKB-UniRule"/>
</dbReference>
<dbReference type="Gene3D" id="3.30.920.10">
    <property type="entry name" value="Frataxin/CyaY"/>
    <property type="match status" value="1"/>
</dbReference>
<dbReference type="HAMAP" id="MF_00142">
    <property type="entry name" value="CyaY"/>
    <property type="match status" value="1"/>
</dbReference>
<dbReference type="InterPro" id="IPR047584">
    <property type="entry name" value="CyaY"/>
</dbReference>
<dbReference type="InterPro" id="IPR002908">
    <property type="entry name" value="Frataxin/CyaY"/>
</dbReference>
<dbReference type="InterPro" id="IPR036524">
    <property type="entry name" value="Frataxin/CyaY_sf"/>
</dbReference>
<dbReference type="InterPro" id="IPR020895">
    <property type="entry name" value="Frataxin_CS"/>
</dbReference>
<dbReference type="NCBIfam" id="TIGR03421">
    <property type="entry name" value="FeS_CyaY"/>
    <property type="match status" value="1"/>
</dbReference>
<dbReference type="PANTHER" id="PTHR16821">
    <property type="entry name" value="FRATAXIN"/>
    <property type="match status" value="1"/>
</dbReference>
<dbReference type="PANTHER" id="PTHR16821:SF2">
    <property type="entry name" value="FRATAXIN, MITOCHONDRIAL"/>
    <property type="match status" value="1"/>
</dbReference>
<dbReference type="Pfam" id="PF01491">
    <property type="entry name" value="Frataxin_Cyay"/>
    <property type="match status" value="1"/>
</dbReference>
<dbReference type="SMART" id="SM01219">
    <property type="entry name" value="Frataxin_Cyay"/>
    <property type="match status" value="1"/>
</dbReference>
<dbReference type="SUPFAM" id="SSF55387">
    <property type="entry name" value="Frataxin/Nqo15-like"/>
    <property type="match status" value="1"/>
</dbReference>
<dbReference type="PROSITE" id="PS01344">
    <property type="entry name" value="FRATAXIN_1"/>
    <property type="match status" value="1"/>
</dbReference>
<dbReference type="PROSITE" id="PS50810">
    <property type="entry name" value="FRATAXIN_2"/>
    <property type="match status" value="1"/>
</dbReference>
<evidence type="ECO:0000255" key="1">
    <source>
        <dbReference type="HAMAP-Rule" id="MF_00142"/>
    </source>
</evidence>
<accession>Q500B9</accession>
<feature type="chain" id="PRO_1000010944" description="Iron-sulfur cluster assembly protein CyaY">
    <location>
        <begin position="1"/>
        <end position="110"/>
    </location>
</feature>